<organism>
    <name type="scientific">Streptobacillus moniliformis (strain ATCC 14647 / DSM 12112 / NCTC 10651 / 9901)</name>
    <dbReference type="NCBI Taxonomy" id="519441"/>
    <lineage>
        <taxon>Bacteria</taxon>
        <taxon>Fusobacteriati</taxon>
        <taxon>Fusobacteriota</taxon>
        <taxon>Fusobacteriia</taxon>
        <taxon>Fusobacteriales</taxon>
        <taxon>Leptotrichiaceae</taxon>
        <taxon>Streptobacillus</taxon>
    </lineage>
</organism>
<keyword id="KW-0067">ATP-binding</keyword>
<keyword id="KW-0997">Cell inner membrane</keyword>
<keyword id="KW-1003">Cell membrane</keyword>
<keyword id="KW-0378">Hydrolase</keyword>
<keyword id="KW-0472">Membrane</keyword>
<keyword id="KW-0479">Metal-binding</keyword>
<keyword id="KW-0482">Metalloprotease</keyword>
<keyword id="KW-0547">Nucleotide-binding</keyword>
<keyword id="KW-0645">Protease</keyword>
<keyword id="KW-1185">Reference proteome</keyword>
<keyword id="KW-0812">Transmembrane</keyword>
<keyword id="KW-1133">Transmembrane helix</keyword>
<keyword id="KW-0862">Zinc</keyword>
<comment type="function">
    <text evidence="1">Acts as a processive, ATP-dependent zinc metallopeptidase for both cytoplasmic and membrane proteins. Plays a role in the quality control of integral membrane proteins.</text>
</comment>
<comment type="cofactor">
    <cofactor evidence="1">
        <name>Zn(2+)</name>
        <dbReference type="ChEBI" id="CHEBI:29105"/>
    </cofactor>
    <text evidence="1">Binds 1 zinc ion per subunit.</text>
</comment>
<comment type="subunit">
    <text evidence="1">Homohexamer.</text>
</comment>
<comment type="subcellular location">
    <subcellularLocation>
        <location evidence="1">Cell inner membrane</location>
        <topology evidence="1">Multi-pass membrane protein</topology>
        <orientation evidence="1">Cytoplasmic side</orientation>
    </subcellularLocation>
</comment>
<comment type="similarity">
    <text evidence="1">In the central section; belongs to the AAA ATPase family.</text>
</comment>
<comment type="similarity">
    <text evidence="1">In the C-terminal section; belongs to the peptidase M41 family.</text>
</comment>
<reference key="1">
    <citation type="journal article" date="2009" name="Stand. Genomic Sci.">
        <title>Complete genome sequence of Streptobacillus moniliformis type strain (9901T).</title>
        <authorList>
            <person name="Nolan M."/>
            <person name="Gronow S."/>
            <person name="Lapidus A."/>
            <person name="Ivanova N."/>
            <person name="Copeland A."/>
            <person name="Lucas S."/>
            <person name="Glavina Del Rio T."/>
            <person name="Chen F."/>
            <person name="Tice H."/>
            <person name="Pitluck S."/>
            <person name="Cheng J.F."/>
            <person name="Sims D."/>
            <person name="Meincke L."/>
            <person name="Bruce D."/>
            <person name="Goodwin L."/>
            <person name="Brettin T."/>
            <person name="Han C."/>
            <person name="Detter J.C."/>
            <person name="Pati A."/>
            <person name="Mavromatis K."/>
            <person name="Mikhailova N."/>
            <person name="Chen A."/>
            <person name="Palaniappan K."/>
            <person name="Land M."/>
            <person name="Hauser L."/>
            <person name="Chang Y.J."/>
            <person name="Jeffries C.D."/>
            <person name="Rohde M."/>
            <person name="Sproer C."/>
            <person name="Goker M."/>
            <person name="Bristow J."/>
            <person name="Eisen J.A."/>
            <person name="Markowitz V."/>
            <person name="Hugenholtz P."/>
            <person name="Kyrpides N.C."/>
            <person name="Klenk H.P."/>
        </authorList>
    </citation>
    <scope>NUCLEOTIDE SEQUENCE [LARGE SCALE GENOMIC DNA]</scope>
    <source>
        <strain>ATCC 14647 / DSM 12112 / NCTC 10651 / 9901</strain>
    </source>
</reference>
<gene>
    <name evidence="1" type="primary">ftsH</name>
    <name type="ordered locus">Smon_0632</name>
</gene>
<feature type="chain" id="PRO_0000400399" description="ATP-dependent zinc metalloprotease FtsH">
    <location>
        <begin position="1"/>
        <end position="683"/>
    </location>
</feature>
<feature type="topological domain" description="Cytoplasmic" evidence="1">
    <location>
        <begin position="1"/>
        <end position="70"/>
    </location>
</feature>
<feature type="transmembrane region" description="Helical" evidence="1">
    <location>
        <begin position="71"/>
        <end position="91"/>
    </location>
</feature>
<feature type="topological domain" description="Periplasmic" evidence="1">
    <location>
        <begin position="92"/>
        <end position="174"/>
    </location>
</feature>
<feature type="transmembrane region" description="Helical" evidence="1">
    <location>
        <begin position="175"/>
        <end position="195"/>
    </location>
</feature>
<feature type="topological domain" description="Cytoplasmic" evidence="1">
    <location>
        <begin position="196"/>
        <end position="683"/>
    </location>
</feature>
<feature type="region of interest" description="Disordered" evidence="2">
    <location>
        <begin position="1"/>
        <end position="43"/>
    </location>
</feature>
<feature type="compositionally biased region" description="Acidic residues" evidence="2">
    <location>
        <begin position="10"/>
        <end position="28"/>
    </location>
</feature>
<feature type="active site" evidence="1">
    <location>
        <position position="495"/>
    </location>
</feature>
<feature type="binding site" evidence="1">
    <location>
        <begin position="270"/>
        <end position="277"/>
    </location>
    <ligand>
        <name>ATP</name>
        <dbReference type="ChEBI" id="CHEBI:30616"/>
    </ligand>
</feature>
<feature type="binding site" evidence="1">
    <location>
        <position position="494"/>
    </location>
    <ligand>
        <name>Zn(2+)</name>
        <dbReference type="ChEBI" id="CHEBI:29105"/>
        <note>catalytic</note>
    </ligand>
</feature>
<feature type="binding site" evidence="1">
    <location>
        <position position="498"/>
    </location>
    <ligand>
        <name>Zn(2+)</name>
        <dbReference type="ChEBI" id="CHEBI:29105"/>
        <note>catalytic</note>
    </ligand>
</feature>
<feature type="binding site" evidence="1">
    <location>
        <position position="569"/>
    </location>
    <ligand>
        <name>Zn(2+)</name>
        <dbReference type="ChEBI" id="CHEBI:29105"/>
        <note>catalytic</note>
    </ligand>
</feature>
<proteinExistence type="inferred from homology"/>
<sequence>MEDKNIKDDEILDDQNDNQEDVQNQDEEKEIKPKKPKKKVYISDDENAEEIKKRIESLKNKNNNISFRVKPPIFFFLILILMSTLFYFYGNKTALFQEKREISYTQFVTKVKQGDITEIRESQEKLTGIKKVAGKVEVFETNKLTDRLGQDTYLMEISKEKNVNIVVLGTPVSSIITRAIFSFAPLFMLLFFFYFINKKMMGSSGGVIGNPFNIGKGKGKISERPNVKFSDVAGLTEEKEELKEIVEFLKNPARFEKAGARVPKGVLLLGEPGTGKTLLAKAVAGESEAAFFPISGSEFIELYVGVGASRVRELFKDAKKEAPAIIFIDEIDAVGRRRGQNKNGGGGNEEREQTLNQLLVEMDGFDTDQRIIVMAATNRSDVLDPALLRGGRFDRRIEVSRPDVKGRIEILKVHSRNKKLASDVKLEDIAKITPGFVGADLENLLNEAAILAARKNSDEITMEDLDEAVDKVGMGLGQKSKIISKRDKDMLAYHEGGHALAATLIPGANKVHKVTIIPRGDAGGYMMPLPEETLGKTRKQILAEINVLFAGRAGEELMMDDIATGAYSDIKRATELAKLLISSVGMSELGPINYEHSDNGFMLSSDLSNETAREIDLEVRKLLKFKYEETLNLLRDNKETLEKIATLLKEKETVTGSEIRALVSGSSVNEVLELDDEQLEKYY</sequence>
<evidence type="ECO:0000255" key="1">
    <source>
        <dbReference type="HAMAP-Rule" id="MF_01458"/>
    </source>
</evidence>
<evidence type="ECO:0000256" key="2">
    <source>
        <dbReference type="SAM" id="MobiDB-lite"/>
    </source>
</evidence>
<accession>D1AXT4</accession>
<name>FTSH_STRM9</name>
<protein>
    <recommendedName>
        <fullName evidence="1">ATP-dependent zinc metalloprotease FtsH</fullName>
        <ecNumber evidence="1">3.4.24.-</ecNumber>
    </recommendedName>
</protein>
<dbReference type="EC" id="3.4.24.-" evidence="1"/>
<dbReference type="EMBL" id="CP001779">
    <property type="protein sequence ID" value="ACZ01110.1"/>
    <property type="molecule type" value="Genomic_DNA"/>
</dbReference>
<dbReference type="RefSeq" id="WP_012858662.1">
    <property type="nucleotide sequence ID" value="NC_013515.1"/>
</dbReference>
<dbReference type="SMR" id="D1AXT4"/>
<dbReference type="STRING" id="519441.Smon_0632"/>
<dbReference type="GeneID" id="29673784"/>
<dbReference type="KEGG" id="smf:Smon_0632"/>
<dbReference type="eggNOG" id="COG0465">
    <property type="taxonomic scope" value="Bacteria"/>
</dbReference>
<dbReference type="HOGENOM" id="CLU_000688_16_2_0"/>
<dbReference type="OrthoDB" id="9809379at2"/>
<dbReference type="Proteomes" id="UP000002072">
    <property type="component" value="Chromosome"/>
</dbReference>
<dbReference type="GO" id="GO:0005886">
    <property type="term" value="C:plasma membrane"/>
    <property type="evidence" value="ECO:0007669"/>
    <property type="project" value="UniProtKB-SubCell"/>
</dbReference>
<dbReference type="GO" id="GO:0005524">
    <property type="term" value="F:ATP binding"/>
    <property type="evidence" value="ECO:0007669"/>
    <property type="project" value="UniProtKB-UniRule"/>
</dbReference>
<dbReference type="GO" id="GO:0016887">
    <property type="term" value="F:ATP hydrolysis activity"/>
    <property type="evidence" value="ECO:0007669"/>
    <property type="project" value="UniProtKB-UniRule"/>
</dbReference>
<dbReference type="GO" id="GO:0004176">
    <property type="term" value="F:ATP-dependent peptidase activity"/>
    <property type="evidence" value="ECO:0007669"/>
    <property type="project" value="InterPro"/>
</dbReference>
<dbReference type="GO" id="GO:0004222">
    <property type="term" value="F:metalloendopeptidase activity"/>
    <property type="evidence" value="ECO:0007669"/>
    <property type="project" value="InterPro"/>
</dbReference>
<dbReference type="GO" id="GO:0008270">
    <property type="term" value="F:zinc ion binding"/>
    <property type="evidence" value="ECO:0007669"/>
    <property type="project" value="UniProtKB-UniRule"/>
</dbReference>
<dbReference type="GO" id="GO:0030163">
    <property type="term" value="P:protein catabolic process"/>
    <property type="evidence" value="ECO:0007669"/>
    <property type="project" value="UniProtKB-UniRule"/>
</dbReference>
<dbReference type="GO" id="GO:0006508">
    <property type="term" value="P:proteolysis"/>
    <property type="evidence" value="ECO:0007669"/>
    <property type="project" value="UniProtKB-KW"/>
</dbReference>
<dbReference type="CDD" id="cd19501">
    <property type="entry name" value="RecA-like_FtsH"/>
    <property type="match status" value="1"/>
</dbReference>
<dbReference type="FunFam" id="1.10.8.60:FF:000001">
    <property type="entry name" value="ATP-dependent zinc metalloprotease FtsH"/>
    <property type="match status" value="1"/>
</dbReference>
<dbReference type="FunFam" id="1.20.58.760:FF:000001">
    <property type="entry name" value="ATP-dependent zinc metalloprotease FtsH"/>
    <property type="match status" value="1"/>
</dbReference>
<dbReference type="FunFam" id="3.40.50.300:FF:000001">
    <property type="entry name" value="ATP-dependent zinc metalloprotease FtsH"/>
    <property type="match status" value="1"/>
</dbReference>
<dbReference type="Gene3D" id="1.10.8.60">
    <property type="match status" value="1"/>
</dbReference>
<dbReference type="Gene3D" id="3.30.720.210">
    <property type="match status" value="1"/>
</dbReference>
<dbReference type="Gene3D" id="3.40.50.300">
    <property type="entry name" value="P-loop containing nucleotide triphosphate hydrolases"/>
    <property type="match status" value="1"/>
</dbReference>
<dbReference type="Gene3D" id="1.20.58.760">
    <property type="entry name" value="Peptidase M41"/>
    <property type="match status" value="1"/>
</dbReference>
<dbReference type="HAMAP" id="MF_01458">
    <property type="entry name" value="FtsH"/>
    <property type="match status" value="1"/>
</dbReference>
<dbReference type="InterPro" id="IPR003593">
    <property type="entry name" value="AAA+_ATPase"/>
</dbReference>
<dbReference type="InterPro" id="IPR041569">
    <property type="entry name" value="AAA_lid_3"/>
</dbReference>
<dbReference type="InterPro" id="IPR003959">
    <property type="entry name" value="ATPase_AAA_core"/>
</dbReference>
<dbReference type="InterPro" id="IPR003960">
    <property type="entry name" value="ATPase_AAA_CS"/>
</dbReference>
<dbReference type="InterPro" id="IPR005936">
    <property type="entry name" value="FtsH"/>
</dbReference>
<dbReference type="InterPro" id="IPR027417">
    <property type="entry name" value="P-loop_NTPase"/>
</dbReference>
<dbReference type="InterPro" id="IPR011546">
    <property type="entry name" value="Pept_M41_FtsH_extracell"/>
</dbReference>
<dbReference type="InterPro" id="IPR000642">
    <property type="entry name" value="Peptidase_M41"/>
</dbReference>
<dbReference type="InterPro" id="IPR037219">
    <property type="entry name" value="Peptidase_M41-like"/>
</dbReference>
<dbReference type="NCBIfam" id="TIGR01241">
    <property type="entry name" value="FtsH_fam"/>
    <property type="match status" value="1"/>
</dbReference>
<dbReference type="PANTHER" id="PTHR23076:SF97">
    <property type="entry name" value="ATP-DEPENDENT ZINC METALLOPROTEASE YME1L1"/>
    <property type="match status" value="1"/>
</dbReference>
<dbReference type="PANTHER" id="PTHR23076">
    <property type="entry name" value="METALLOPROTEASE M41 FTSH"/>
    <property type="match status" value="1"/>
</dbReference>
<dbReference type="Pfam" id="PF00004">
    <property type="entry name" value="AAA"/>
    <property type="match status" value="1"/>
</dbReference>
<dbReference type="Pfam" id="PF17862">
    <property type="entry name" value="AAA_lid_3"/>
    <property type="match status" value="1"/>
</dbReference>
<dbReference type="Pfam" id="PF06480">
    <property type="entry name" value="FtsH_ext"/>
    <property type="match status" value="1"/>
</dbReference>
<dbReference type="Pfam" id="PF01434">
    <property type="entry name" value="Peptidase_M41"/>
    <property type="match status" value="1"/>
</dbReference>
<dbReference type="SMART" id="SM00382">
    <property type="entry name" value="AAA"/>
    <property type="match status" value="1"/>
</dbReference>
<dbReference type="SUPFAM" id="SSF140990">
    <property type="entry name" value="FtsH protease domain-like"/>
    <property type="match status" value="1"/>
</dbReference>
<dbReference type="SUPFAM" id="SSF52540">
    <property type="entry name" value="P-loop containing nucleoside triphosphate hydrolases"/>
    <property type="match status" value="1"/>
</dbReference>
<dbReference type="PROSITE" id="PS00674">
    <property type="entry name" value="AAA"/>
    <property type="match status" value="1"/>
</dbReference>